<organism>
    <name type="scientific">Chlamydia pneumoniae</name>
    <name type="common">Chlamydophila pneumoniae</name>
    <dbReference type="NCBI Taxonomy" id="83558"/>
    <lineage>
        <taxon>Bacteria</taxon>
        <taxon>Pseudomonadati</taxon>
        <taxon>Chlamydiota</taxon>
        <taxon>Chlamydiia</taxon>
        <taxon>Chlamydiales</taxon>
        <taxon>Chlamydiaceae</taxon>
        <taxon>Chlamydia/Chlamydophila group</taxon>
        <taxon>Chlamydia</taxon>
    </lineage>
</organism>
<reference key="1">
    <citation type="journal article" date="1999" name="Nat. Genet.">
        <title>Comparative genomes of Chlamydia pneumoniae and C. trachomatis.</title>
        <authorList>
            <person name="Kalman S."/>
            <person name="Mitchell W.P."/>
            <person name="Marathe R."/>
            <person name="Lammel C.J."/>
            <person name="Fan J."/>
            <person name="Hyman R.W."/>
            <person name="Olinger L."/>
            <person name="Grimwood J."/>
            <person name="Davis R.W."/>
            <person name="Stephens R.S."/>
        </authorList>
    </citation>
    <scope>NUCLEOTIDE SEQUENCE [LARGE SCALE GENOMIC DNA]</scope>
    <source>
        <strain>CWL029</strain>
    </source>
</reference>
<reference key="2">
    <citation type="journal article" date="2000" name="Nucleic Acids Res.">
        <title>Genome sequences of Chlamydia trachomatis MoPn and Chlamydia pneumoniae AR39.</title>
        <authorList>
            <person name="Read T.D."/>
            <person name="Brunham R.C."/>
            <person name="Shen C."/>
            <person name="Gill S.R."/>
            <person name="Heidelberg J.F."/>
            <person name="White O."/>
            <person name="Hickey E.K."/>
            <person name="Peterson J.D."/>
            <person name="Utterback T.R."/>
            <person name="Berry K.J."/>
            <person name="Bass S."/>
            <person name="Linher K.D."/>
            <person name="Weidman J.F."/>
            <person name="Khouri H.M."/>
            <person name="Craven B."/>
            <person name="Bowman C."/>
            <person name="Dodson R.J."/>
            <person name="Gwinn M.L."/>
            <person name="Nelson W.C."/>
            <person name="DeBoy R.T."/>
            <person name="Kolonay J.F."/>
            <person name="McClarty G."/>
            <person name="Salzberg S.L."/>
            <person name="Eisen J.A."/>
            <person name="Fraser C.M."/>
        </authorList>
    </citation>
    <scope>NUCLEOTIDE SEQUENCE [LARGE SCALE GENOMIC DNA]</scope>
    <source>
        <strain>AR39</strain>
    </source>
</reference>
<reference key="3">
    <citation type="journal article" date="2000" name="Nucleic Acids Res.">
        <title>Comparison of whole genome sequences of Chlamydia pneumoniae J138 from Japan and CWL029 from USA.</title>
        <authorList>
            <person name="Shirai M."/>
            <person name="Hirakawa H."/>
            <person name="Kimoto M."/>
            <person name="Tabuchi M."/>
            <person name="Kishi F."/>
            <person name="Ouchi K."/>
            <person name="Shiba T."/>
            <person name="Ishii K."/>
            <person name="Hattori M."/>
            <person name="Kuhara S."/>
            <person name="Nakazawa T."/>
        </authorList>
    </citation>
    <scope>NUCLEOTIDE SEQUENCE [LARGE SCALE GENOMIC DNA]</scope>
    <source>
        <strain>J138</strain>
    </source>
</reference>
<reference key="4">
    <citation type="submission" date="2002-05" db="EMBL/GenBank/DDBJ databases">
        <title>The genome sequence of Chlamydia pneumoniae TW183 and comparison with other Chlamydia strains based on whole genome sequence analysis.</title>
        <authorList>
            <person name="Geng M.M."/>
            <person name="Schuhmacher A."/>
            <person name="Muehldorfer I."/>
            <person name="Bensch K.W."/>
            <person name="Schaefer K.P."/>
            <person name="Schneider S."/>
            <person name="Pohl T."/>
            <person name="Essig A."/>
            <person name="Marre R."/>
            <person name="Melchers K."/>
        </authorList>
    </citation>
    <scope>NUCLEOTIDE SEQUENCE [LARGE SCALE GENOMIC DNA]</scope>
    <source>
        <strain>TW-183</strain>
    </source>
</reference>
<keyword id="KW-0963">Cytoplasm</keyword>
<keyword id="KW-0694">RNA-binding</keyword>
<protein>
    <recommendedName>
        <fullName evidence="1">SsrA-binding protein</fullName>
    </recommendedName>
    <alternativeName>
        <fullName evidence="1">Small protein B</fullName>
    </alternativeName>
</protein>
<name>SSRP_CHLPN</name>
<accession>Q9Z8K1</accession>
<accession>Q9JQJ4</accession>
<accession>Q9K272</accession>
<proteinExistence type="inferred from homology"/>
<comment type="function">
    <text evidence="1">Required for rescue of stalled ribosomes mediated by trans-translation. Binds to transfer-messenger RNA (tmRNA), required for stable association of tmRNA with ribosomes. tmRNA and SmpB together mimic tRNA shape, replacing the anticodon stem-loop with SmpB. tmRNA is encoded by the ssrA gene; the 2 termini fold to resemble tRNA(Ala) and it encodes a 'tag peptide', a short internal open reading frame. During trans-translation Ala-aminoacylated tmRNA acts like a tRNA, entering the A-site of stalled ribosomes, displacing the stalled mRNA. The ribosome then switches to translate the ORF on the tmRNA; the nascent peptide is terminated with the 'tag peptide' encoded by the tmRNA and targeted for degradation. The ribosome is freed to recommence translation, which seems to be the essential function of trans-translation.</text>
</comment>
<comment type="subcellular location">
    <subcellularLocation>
        <location evidence="1">Cytoplasm</location>
    </subcellularLocation>
    <text evidence="1">The tmRNA-SmpB complex associates with stalled 70S ribosomes.</text>
</comment>
<comment type="similarity">
    <text evidence="1">Belongs to the SmpB family.</text>
</comment>
<comment type="sequence caution" evidence="2">
    <conflict type="erroneous initiation">
        <sequence resource="EMBL-CDS" id="AAF38264"/>
    </conflict>
    <text>Extended N-terminus.</text>
</comment>
<comment type="sequence caution" evidence="2">
    <conflict type="erroneous initiation">
        <sequence resource="EMBL-CDS" id="AAP98279"/>
    </conflict>
    <text>Extended N-terminus.</text>
</comment>
<sequence>MAQKEIVSNRKALRNYEVIETLEAGIVLTGTEIKSLRDHGGNLGDAYVIVSKGEGWLLNASIAPYRFGNIYNHEERRKRKLLLHRYELRKLEGKIAQKGMTLIPLGMFLSRGYVKVRLGCCRGKKAYDKRRTIIEREKEREVAAAMKRRHH</sequence>
<evidence type="ECO:0000255" key="1">
    <source>
        <dbReference type="HAMAP-Rule" id="MF_00023"/>
    </source>
</evidence>
<evidence type="ECO:0000305" key="2"/>
<feature type="chain" id="PRO_0000102930" description="SsrA-binding protein">
    <location>
        <begin position="1"/>
        <end position="151"/>
    </location>
</feature>
<feature type="sequence conflict" description="In Ref. 4; AAP98279." evidence="2" ref="4">
    <original>F</original>
    <variation>L</variation>
    <location>
        <position position="108"/>
    </location>
</feature>
<dbReference type="EMBL" id="AE001363">
    <property type="protein sequence ID" value="AAD18486.1"/>
    <property type="molecule type" value="Genomic_DNA"/>
</dbReference>
<dbReference type="EMBL" id="AE002161">
    <property type="protein sequence ID" value="AAF38264.1"/>
    <property type="status" value="ALT_INIT"/>
    <property type="molecule type" value="Genomic_DNA"/>
</dbReference>
<dbReference type="EMBL" id="BA000008">
    <property type="protein sequence ID" value="BAA98547.1"/>
    <property type="molecule type" value="Genomic_DNA"/>
</dbReference>
<dbReference type="EMBL" id="AE009440">
    <property type="protein sequence ID" value="AAP98279.1"/>
    <property type="status" value="ALT_INIT"/>
    <property type="molecule type" value="Genomic_DNA"/>
</dbReference>
<dbReference type="PIR" id="A86533">
    <property type="entry name" value="A86533"/>
</dbReference>
<dbReference type="PIR" id="G72090">
    <property type="entry name" value="G72090"/>
</dbReference>
<dbReference type="PIR" id="H81578">
    <property type="entry name" value="H81578"/>
</dbReference>
<dbReference type="RefSeq" id="NP_224542.1">
    <property type="nucleotide sequence ID" value="NC_000922.1"/>
</dbReference>
<dbReference type="RefSeq" id="WP_010882985.1">
    <property type="nucleotide sequence ID" value="NZ_LN847257.1"/>
</dbReference>
<dbReference type="SMR" id="Q9Z8K1"/>
<dbReference type="STRING" id="406984.CPK_ORF00845"/>
<dbReference type="KEGG" id="cpa:CP_0421"/>
<dbReference type="KEGG" id="cpj:smpB"/>
<dbReference type="KEGG" id="cpn:CPn_0337"/>
<dbReference type="KEGG" id="cpt:CpB0345"/>
<dbReference type="PATRIC" id="fig|115713.3.peg.372"/>
<dbReference type="eggNOG" id="COG0691">
    <property type="taxonomic scope" value="Bacteria"/>
</dbReference>
<dbReference type="HOGENOM" id="CLU_108953_0_0_0"/>
<dbReference type="OrthoDB" id="9805462at2"/>
<dbReference type="Proteomes" id="UP000000583">
    <property type="component" value="Chromosome"/>
</dbReference>
<dbReference type="Proteomes" id="UP000000801">
    <property type="component" value="Chromosome"/>
</dbReference>
<dbReference type="GO" id="GO:0005829">
    <property type="term" value="C:cytosol"/>
    <property type="evidence" value="ECO:0007669"/>
    <property type="project" value="TreeGrafter"/>
</dbReference>
<dbReference type="GO" id="GO:0003723">
    <property type="term" value="F:RNA binding"/>
    <property type="evidence" value="ECO:0007669"/>
    <property type="project" value="UniProtKB-UniRule"/>
</dbReference>
<dbReference type="GO" id="GO:0070929">
    <property type="term" value="P:trans-translation"/>
    <property type="evidence" value="ECO:0007669"/>
    <property type="project" value="UniProtKB-UniRule"/>
</dbReference>
<dbReference type="CDD" id="cd09294">
    <property type="entry name" value="SmpB"/>
    <property type="match status" value="1"/>
</dbReference>
<dbReference type="Gene3D" id="2.40.280.10">
    <property type="match status" value="1"/>
</dbReference>
<dbReference type="HAMAP" id="MF_00023">
    <property type="entry name" value="SmpB"/>
    <property type="match status" value="1"/>
</dbReference>
<dbReference type="InterPro" id="IPR023620">
    <property type="entry name" value="SmpB"/>
</dbReference>
<dbReference type="InterPro" id="IPR000037">
    <property type="entry name" value="SsrA-bd_prot"/>
</dbReference>
<dbReference type="InterPro" id="IPR020081">
    <property type="entry name" value="SsrA-bd_prot_CS"/>
</dbReference>
<dbReference type="NCBIfam" id="NF003843">
    <property type="entry name" value="PRK05422.1"/>
    <property type="match status" value="1"/>
</dbReference>
<dbReference type="NCBIfam" id="TIGR00086">
    <property type="entry name" value="smpB"/>
    <property type="match status" value="1"/>
</dbReference>
<dbReference type="PANTHER" id="PTHR30308:SF2">
    <property type="entry name" value="SSRA-BINDING PROTEIN"/>
    <property type="match status" value="1"/>
</dbReference>
<dbReference type="PANTHER" id="PTHR30308">
    <property type="entry name" value="TMRNA-BINDING COMPONENT OF TRANS-TRANSLATION TAGGING COMPLEX"/>
    <property type="match status" value="1"/>
</dbReference>
<dbReference type="Pfam" id="PF01668">
    <property type="entry name" value="SmpB"/>
    <property type="match status" value="1"/>
</dbReference>
<dbReference type="SUPFAM" id="SSF74982">
    <property type="entry name" value="Small protein B (SmpB)"/>
    <property type="match status" value="1"/>
</dbReference>
<dbReference type="PROSITE" id="PS01317">
    <property type="entry name" value="SSRP"/>
    <property type="match status" value="1"/>
</dbReference>
<gene>
    <name evidence="1" type="primary">smpB</name>
    <name type="ordered locus">CPn_0337</name>
    <name type="ordered locus">CP_0421</name>
    <name type="ordered locus">CpB0345</name>
</gene>